<accession>Q49YD0</accession>
<comment type="function">
    <text evidence="1">Component of the acetyl coenzyme A carboxylase (ACC) complex. Biotin carboxylase (BC) catalyzes the carboxylation of biotin on its carrier protein (BCCP) and then the CO(2) group is transferred by the transcarboxylase to acetyl-CoA to form malonyl-CoA.</text>
</comment>
<comment type="catalytic activity">
    <reaction evidence="1">
        <text>N(6)-carboxybiotinyl-L-lysyl-[protein] + acetyl-CoA = N(6)-biotinyl-L-lysyl-[protein] + malonyl-CoA</text>
        <dbReference type="Rhea" id="RHEA:54728"/>
        <dbReference type="Rhea" id="RHEA-COMP:10505"/>
        <dbReference type="Rhea" id="RHEA-COMP:10506"/>
        <dbReference type="ChEBI" id="CHEBI:57288"/>
        <dbReference type="ChEBI" id="CHEBI:57384"/>
        <dbReference type="ChEBI" id="CHEBI:83144"/>
        <dbReference type="ChEBI" id="CHEBI:83145"/>
        <dbReference type="EC" id="2.1.3.15"/>
    </reaction>
</comment>
<comment type="cofactor">
    <cofactor evidence="1">
        <name>Zn(2+)</name>
        <dbReference type="ChEBI" id="CHEBI:29105"/>
    </cofactor>
    <text evidence="1">Binds 1 zinc ion per subunit.</text>
</comment>
<comment type="pathway">
    <text evidence="1">Lipid metabolism; malonyl-CoA biosynthesis; malonyl-CoA from acetyl-CoA: step 1/1.</text>
</comment>
<comment type="subunit">
    <text evidence="1">Acetyl-CoA carboxylase is a heterohexamer composed of biotin carboxyl carrier protein (AccB), biotin carboxylase (AccC) and two subunits each of ACCase subunit alpha (AccA) and ACCase subunit beta (AccD).</text>
</comment>
<comment type="subcellular location">
    <subcellularLocation>
        <location evidence="1">Cytoplasm</location>
    </subcellularLocation>
</comment>
<comment type="similarity">
    <text evidence="1">Belongs to the AccD/PCCB family.</text>
</comment>
<reference key="1">
    <citation type="journal article" date="2005" name="Proc. Natl. Acad. Sci. U.S.A.">
        <title>Whole genome sequence of Staphylococcus saprophyticus reveals the pathogenesis of uncomplicated urinary tract infection.</title>
        <authorList>
            <person name="Kuroda M."/>
            <person name="Yamashita A."/>
            <person name="Hirakawa H."/>
            <person name="Kumano M."/>
            <person name="Morikawa K."/>
            <person name="Higashide M."/>
            <person name="Maruyama A."/>
            <person name="Inose Y."/>
            <person name="Matoba K."/>
            <person name="Toh H."/>
            <person name="Kuhara S."/>
            <person name="Hattori M."/>
            <person name="Ohta T."/>
        </authorList>
    </citation>
    <scope>NUCLEOTIDE SEQUENCE [LARGE SCALE GENOMIC DNA]</scope>
    <source>
        <strain>ATCC 15305 / DSM 20229 / NCIMB 8711 / NCTC 7292 / S-41</strain>
    </source>
</reference>
<proteinExistence type="inferred from homology"/>
<sequence length="288" mass="31889">MFKDFFNRSSKKKKYVTVSDSKQSDVPAGIMTKCPKCKKIMYTKELAENLNVCFNCDHHIALTAHNRIEAISDEGTFTEFDKGMTSANPLDFPSYEEKIQKDQQKTGLNEAVVTGTAQLDGMTFGVAVMDARFRMGSMGSVLGEKICRIIEHCTENRLPFILFSASGGARMQEGIISLMQMGKTSVSLKRHADAGLLYISYITNPTTGGVSASFASVGDINISEPKALIGFAGRRVIEQTINEKLPDDFQTAEFLLEHGQLDKVVHRKEMKATLSNILKMHQEVKTNA</sequence>
<dbReference type="EC" id="2.1.3.15" evidence="1"/>
<dbReference type="EMBL" id="AP008934">
    <property type="protein sequence ID" value="BAE18211.1"/>
    <property type="molecule type" value="Genomic_DNA"/>
</dbReference>
<dbReference type="RefSeq" id="WP_011302908.1">
    <property type="nucleotide sequence ID" value="NZ_MTGA01000038.1"/>
</dbReference>
<dbReference type="SMR" id="Q49YD0"/>
<dbReference type="GeneID" id="66867299"/>
<dbReference type="KEGG" id="ssp:SSP1066"/>
<dbReference type="eggNOG" id="COG0777">
    <property type="taxonomic scope" value="Bacteria"/>
</dbReference>
<dbReference type="HOGENOM" id="CLU_015486_1_0_9"/>
<dbReference type="OrthoDB" id="9772975at2"/>
<dbReference type="UniPathway" id="UPA00655">
    <property type="reaction ID" value="UER00711"/>
</dbReference>
<dbReference type="Proteomes" id="UP000006371">
    <property type="component" value="Chromosome"/>
</dbReference>
<dbReference type="GO" id="GO:0009317">
    <property type="term" value="C:acetyl-CoA carboxylase complex"/>
    <property type="evidence" value="ECO:0007669"/>
    <property type="project" value="InterPro"/>
</dbReference>
<dbReference type="GO" id="GO:0003989">
    <property type="term" value="F:acetyl-CoA carboxylase activity"/>
    <property type="evidence" value="ECO:0007669"/>
    <property type="project" value="InterPro"/>
</dbReference>
<dbReference type="GO" id="GO:0005524">
    <property type="term" value="F:ATP binding"/>
    <property type="evidence" value="ECO:0007669"/>
    <property type="project" value="UniProtKB-KW"/>
</dbReference>
<dbReference type="GO" id="GO:0016743">
    <property type="term" value="F:carboxyl- or carbamoyltransferase activity"/>
    <property type="evidence" value="ECO:0007669"/>
    <property type="project" value="UniProtKB-UniRule"/>
</dbReference>
<dbReference type="GO" id="GO:0008270">
    <property type="term" value="F:zinc ion binding"/>
    <property type="evidence" value="ECO:0007669"/>
    <property type="project" value="UniProtKB-UniRule"/>
</dbReference>
<dbReference type="GO" id="GO:0006633">
    <property type="term" value="P:fatty acid biosynthetic process"/>
    <property type="evidence" value="ECO:0007669"/>
    <property type="project" value="UniProtKB-KW"/>
</dbReference>
<dbReference type="GO" id="GO:2001295">
    <property type="term" value="P:malonyl-CoA biosynthetic process"/>
    <property type="evidence" value="ECO:0007669"/>
    <property type="project" value="UniProtKB-UniRule"/>
</dbReference>
<dbReference type="Gene3D" id="3.90.226.10">
    <property type="entry name" value="2-enoyl-CoA Hydratase, Chain A, domain 1"/>
    <property type="match status" value="1"/>
</dbReference>
<dbReference type="HAMAP" id="MF_01395">
    <property type="entry name" value="AcetylCoA_CT_beta"/>
    <property type="match status" value="1"/>
</dbReference>
<dbReference type="InterPro" id="IPR034733">
    <property type="entry name" value="AcCoA_carboxyl_beta"/>
</dbReference>
<dbReference type="InterPro" id="IPR000438">
    <property type="entry name" value="Acetyl_CoA_COase_Trfase_b_su"/>
</dbReference>
<dbReference type="InterPro" id="IPR029045">
    <property type="entry name" value="ClpP/crotonase-like_dom_sf"/>
</dbReference>
<dbReference type="InterPro" id="IPR011762">
    <property type="entry name" value="COA_CT_N"/>
</dbReference>
<dbReference type="InterPro" id="IPR041010">
    <property type="entry name" value="Znf-ACC"/>
</dbReference>
<dbReference type="NCBIfam" id="TIGR00515">
    <property type="entry name" value="accD"/>
    <property type="match status" value="1"/>
</dbReference>
<dbReference type="PANTHER" id="PTHR42995">
    <property type="entry name" value="ACETYL-COENZYME A CARBOXYLASE CARBOXYL TRANSFERASE SUBUNIT BETA, CHLOROPLASTIC"/>
    <property type="match status" value="1"/>
</dbReference>
<dbReference type="PANTHER" id="PTHR42995:SF5">
    <property type="entry name" value="ACETYL-COENZYME A CARBOXYLASE CARBOXYL TRANSFERASE SUBUNIT BETA, CHLOROPLASTIC"/>
    <property type="match status" value="1"/>
</dbReference>
<dbReference type="Pfam" id="PF01039">
    <property type="entry name" value="Carboxyl_trans"/>
    <property type="match status" value="1"/>
</dbReference>
<dbReference type="Pfam" id="PF17848">
    <property type="entry name" value="Zn_ribbon_ACC"/>
    <property type="match status" value="1"/>
</dbReference>
<dbReference type="PRINTS" id="PR01070">
    <property type="entry name" value="ACCCTRFRASEB"/>
</dbReference>
<dbReference type="SUPFAM" id="SSF52096">
    <property type="entry name" value="ClpP/crotonase"/>
    <property type="match status" value="1"/>
</dbReference>
<dbReference type="PROSITE" id="PS50980">
    <property type="entry name" value="COA_CT_NTER"/>
    <property type="match status" value="1"/>
</dbReference>
<keyword id="KW-0067">ATP-binding</keyword>
<keyword id="KW-0963">Cytoplasm</keyword>
<keyword id="KW-0275">Fatty acid biosynthesis</keyword>
<keyword id="KW-0276">Fatty acid metabolism</keyword>
<keyword id="KW-0444">Lipid biosynthesis</keyword>
<keyword id="KW-0443">Lipid metabolism</keyword>
<keyword id="KW-0479">Metal-binding</keyword>
<keyword id="KW-0547">Nucleotide-binding</keyword>
<keyword id="KW-1185">Reference proteome</keyword>
<keyword id="KW-0808">Transferase</keyword>
<keyword id="KW-0862">Zinc</keyword>
<keyword id="KW-0863">Zinc-finger</keyword>
<organism>
    <name type="scientific">Staphylococcus saprophyticus subsp. saprophyticus (strain ATCC 15305 / DSM 20229 / NCIMB 8711 / NCTC 7292 / S-41)</name>
    <dbReference type="NCBI Taxonomy" id="342451"/>
    <lineage>
        <taxon>Bacteria</taxon>
        <taxon>Bacillati</taxon>
        <taxon>Bacillota</taxon>
        <taxon>Bacilli</taxon>
        <taxon>Bacillales</taxon>
        <taxon>Staphylococcaceae</taxon>
        <taxon>Staphylococcus</taxon>
    </lineage>
</organism>
<protein>
    <recommendedName>
        <fullName evidence="1">Acetyl-coenzyme A carboxylase carboxyl transferase subunit beta</fullName>
        <shortName evidence="1">ACCase subunit beta</shortName>
        <shortName evidence="1">Acetyl-CoA carboxylase carboxyltransferase subunit beta</shortName>
        <ecNumber evidence="1">2.1.3.15</ecNumber>
    </recommendedName>
</protein>
<evidence type="ECO:0000255" key="1">
    <source>
        <dbReference type="HAMAP-Rule" id="MF_01395"/>
    </source>
</evidence>
<evidence type="ECO:0000255" key="2">
    <source>
        <dbReference type="PROSITE-ProRule" id="PRU01136"/>
    </source>
</evidence>
<feature type="chain" id="PRO_0000389865" description="Acetyl-coenzyme A carboxylase carboxyl transferase subunit beta">
    <location>
        <begin position="1"/>
        <end position="288"/>
    </location>
</feature>
<feature type="domain" description="CoA carboxyltransferase N-terminal" evidence="2">
    <location>
        <begin position="30"/>
        <end position="288"/>
    </location>
</feature>
<feature type="zinc finger region" description="C4-type" evidence="1">
    <location>
        <begin position="34"/>
        <end position="56"/>
    </location>
</feature>
<feature type="binding site" evidence="1">
    <location>
        <position position="34"/>
    </location>
    <ligand>
        <name>Zn(2+)</name>
        <dbReference type="ChEBI" id="CHEBI:29105"/>
    </ligand>
</feature>
<feature type="binding site" evidence="1">
    <location>
        <position position="37"/>
    </location>
    <ligand>
        <name>Zn(2+)</name>
        <dbReference type="ChEBI" id="CHEBI:29105"/>
    </ligand>
</feature>
<feature type="binding site" evidence="1">
    <location>
        <position position="53"/>
    </location>
    <ligand>
        <name>Zn(2+)</name>
        <dbReference type="ChEBI" id="CHEBI:29105"/>
    </ligand>
</feature>
<feature type="binding site" evidence="1">
    <location>
        <position position="56"/>
    </location>
    <ligand>
        <name>Zn(2+)</name>
        <dbReference type="ChEBI" id="CHEBI:29105"/>
    </ligand>
</feature>
<name>ACCD_STAS1</name>
<gene>
    <name evidence="1" type="primary">accD</name>
    <name type="ordered locus">SSP1066</name>
</gene>